<keyword id="KW-0597">Phosphoprotein</keyword>
<keyword id="KW-1185">Reference proteome</keyword>
<keyword id="KW-0687">Ribonucleoprotein</keyword>
<keyword id="KW-0689">Ribosomal protein</keyword>
<reference key="1">
    <citation type="journal article" date="1987" name="Nucleic Acids Res.">
        <title>cDNA and deduced amino acid sequence of Drosophila rp21C, another 'A'-type ribosomal protein.</title>
        <authorList>
            <person name="Wigboldus J.D."/>
        </authorList>
    </citation>
    <scope>NUCLEOTIDE SEQUENCE [MRNA]</scope>
</reference>
<reference key="2">
    <citation type="journal article" date="1993" name="J. Cell. Biochem.">
        <title>Drosophila acidic ribosomal protein rpA2: sequence and characterization.</title>
        <authorList>
            <person name="Olson P.F."/>
            <person name="Salo T."/>
            <person name="Garrison K."/>
            <person name="Fessler J.H."/>
        </authorList>
    </citation>
    <scope>NUCLEOTIDE SEQUENCE</scope>
</reference>
<reference key="3">
    <citation type="journal article" date="2000" name="Science">
        <title>The genome sequence of Drosophila melanogaster.</title>
        <authorList>
            <person name="Adams M.D."/>
            <person name="Celniker S.E."/>
            <person name="Holt R.A."/>
            <person name="Evans C.A."/>
            <person name="Gocayne J.D."/>
            <person name="Amanatides P.G."/>
            <person name="Scherer S.E."/>
            <person name="Li P.W."/>
            <person name="Hoskins R.A."/>
            <person name="Galle R.F."/>
            <person name="George R.A."/>
            <person name="Lewis S.E."/>
            <person name="Richards S."/>
            <person name="Ashburner M."/>
            <person name="Henderson S.N."/>
            <person name="Sutton G.G."/>
            <person name="Wortman J.R."/>
            <person name="Yandell M.D."/>
            <person name="Zhang Q."/>
            <person name="Chen L.X."/>
            <person name="Brandon R.C."/>
            <person name="Rogers Y.-H.C."/>
            <person name="Blazej R.G."/>
            <person name="Champe M."/>
            <person name="Pfeiffer B.D."/>
            <person name="Wan K.H."/>
            <person name="Doyle C."/>
            <person name="Baxter E.G."/>
            <person name="Helt G."/>
            <person name="Nelson C.R."/>
            <person name="Miklos G.L.G."/>
            <person name="Abril J.F."/>
            <person name="Agbayani A."/>
            <person name="An H.-J."/>
            <person name="Andrews-Pfannkoch C."/>
            <person name="Baldwin D."/>
            <person name="Ballew R.M."/>
            <person name="Basu A."/>
            <person name="Baxendale J."/>
            <person name="Bayraktaroglu L."/>
            <person name="Beasley E.M."/>
            <person name="Beeson K.Y."/>
            <person name="Benos P.V."/>
            <person name="Berman B.P."/>
            <person name="Bhandari D."/>
            <person name="Bolshakov S."/>
            <person name="Borkova D."/>
            <person name="Botchan M.R."/>
            <person name="Bouck J."/>
            <person name="Brokstein P."/>
            <person name="Brottier P."/>
            <person name="Burtis K.C."/>
            <person name="Busam D.A."/>
            <person name="Butler H."/>
            <person name="Cadieu E."/>
            <person name="Center A."/>
            <person name="Chandra I."/>
            <person name="Cherry J.M."/>
            <person name="Cawley S."/>
            <person name="Dahlke C."/>
            <person name="Davenport L.B."/>
            <person name="Davies P."/>
            <person name="de Pablos B."/>
            <person name="Delcher A."/>
            <person name="Deng Z."/>
            <person name="Mays A.D."/>
            <person name="Dew I."/>
            <person name="Dietz S.M."/>
            <person name="Dodson K."/>
            <person name="Doup L.E."/>
            <person name="Downes M."/>
            <person name="Dugan-Rocha S."/>
            <person name="Dunkov B.C."/>
            <person name="Dunn P."/>
            <person name="Durbin K.J."/>
            <person name="Evangelista C.C."/>
            <person name="Ferraz C."/>
            <person name="Ferriera S."/>
            <person name="Fleischmann W."/>
            <person name="Fosler C."/>
            <person name="Gabrielian A.E."/>
            <person name="Garg N.S."/>
            <person name="Gelbart W.M."/>
            <person name="Glasser K."/>
            <person name="Glodek A."/>
            <person name="Gong F."/>
            <person name="Gorrell J.H."/>
            <person name="Gu Z."/>
            <person name="Guan P."/>
            <person name="Harris M."/>
            <person name="Harris N.L."/>
            <person name="Harvey D.A."/>
            <person name="Heiman T.J."/>
            <person name="Hernandez J.R."/>
            <person name="Houck J."/>
            <person name="Hostin D."/>
            <person name="Houston K.A."/>
            <person name="Howland T.J."/>
            <person name="Wei M.-H."/>
            <person name="Ibegwam C."/>
            <person name="Jalali M."/>
            <person name="Kalush F."/>
            <person name="Karpen G.H."/>
            <person name="Ke Z."/>
            <person name="Kennison J.A."/>
            <person name="Ketchum K.A."/>
            <person name="Kimmel B.E."/>
            <person name="Kodira C.D."/>
            <person name="Kraft C.L."/>
            <person name="Kravitz S."/>
            <person name="Kulp D."/>
            <person name="Lai Z."/>
            <person name="Lasko P."/>
            <person name="Lei Y."/>
            <person name="Levitsky A.A."/>
            <person name="Li J.H."/>
            <person name="Li Z."/>
            <person name="Liang Y."/>
            <person name="Lin X."/>
            <person name="Liu X."/>
            <person name="Mattei B."/>
            <person name="McIntosh T.C."/>
            <person name="McLeod M.P."/>
            <person name="McPherson D."/>
            <person name="Merkulov G."/>
            <person name="Milshina N.V."/>
            <person name="Mobarry C."/>
            <person name="Morris J."/>
            <person name="Moshrefi A."/>
            <person name="Mount S.M."/>
            <person name="Moy M."/>
            <person name="Murphy B."/>
            <person name="Murphy L."/>
            <person name="Muzny D.M."/>
            <person name="Nelson D.L."/>
            <person name="Nelson D.R."/>
            <person name="Nelson K.A."/>
            <person name="Nixon K."/>
            <person name="Nusskern D.R."/>
            <person name="Pacleb J.M."/>
            <person name="Palazzolo M."/>
            <person name="Pittman G.S."/>
            <person name="Pan S."/>
            <person name="Pollard J."/>
            <person name="Puri V."/>
            <person name="Reese M.G."/>
            <person name="Reinert K."/>
            <person name="Remington K."/>
            <person name="Saunders R.D.C."/>
            <person name="Scheeler F."/>
            <person name="Shen H."/>
            <person name="Shue B.C."/>
            <person name="Siden-Kiamos I."/>
            <person name="Simpson M."/>
            <person name="Skupski M.P."/>
            <person name="Smith T.J."/>
            <person name="Spier E."/>
            <person name="Spradling A.C."/>
            <person name="Stapleton M."/>
            <person name="Strong R."/>
            <person name="Sun E."/>
            <person name="Svirskas R."/>
            <person name="Tector C."/>
            <person name="Turner R."/>
            <person name="Venter E."/>
            <person name="Wang A.H."/>
            <person name="Wang X."/>
            <person name="Wang Z.-Y."/>
            <person name="Wassarman D.A."/>
            <person name="Weinstock G.M."/>
            <person name="Weissenbach J."/>
            <person name="Williams S.M."/>
            <person name="Woodage T."/>
            <person name="Worley K.C."/>
            <person name="Wu D."/>
            <person name="Yang S."/>
            <person name="Yao Q.A."/>
            <person name="Ye J."/>
            <person name="Yeh R.-F."/>
            <person name="Zaveri J.S."/>
            <person name="Zhan M."/>
            <person name="Zhang G."/>
            <person name="Zhao Q."/>
            <person name="Zheng L."/>
            <person name="Zheng X.H."/>
            <person name="Zhong F.N."/>
            <person name="Zhong W."/>
            <person name="Zhou X."/>
            <person name="Zhu S.C."/>
            <person name="Zhu X."/>
            <person name="Smith H.O."/>
            <person name="Gibbs R.A."/>
            <person name="Myers E.W."/>
            <person name="Rubin G.M."/>
            <person name="Venter J.C."/>
        </authorList>
    </citation>
    <scope>NUCLEOTIDE SEQUENCE [LARGE SCALE GENOMIC DNA]</scope>
    <source>
        <strain>Berkeley</strain>
    </source>
</reference>
<reference key="4">
    <citation type="journal article" date="2002" name="Genome Biol.">
        <title>Annotation of the Drosophila melanogaster euchromatic genome: a systematic review.</title>
        <authorList>
            <person name="Misra S."/>
            <person name="Crosby M.A."/>
            <person name="Mungall C.J."/>
            <person name="Matthews B.B."/>
            <person name="Campbell K.S."/>
            <person name="Hradecky P."/>
            <person name="Huang Y."/>
            <person name="Kaminker J.S."/>
            <person name="Millburn G.H."/>
            <person name="Prochnik S.E."/>
            <person name="Smith C.D."/>
            <person name="Tupy J.L."/>
            <person name="Whitfield E.J."/>
            <person name="Bayraktaroglu L."/>
            <person name="Berman B.P."/>
            <person name="Bettencourt B.R."/>
            <person name="Celniker S.E."/>
            <person name="de Grey A.D.N.J."/>
            <person name="Drysdale R.A."/>
            <person name="Harris N.L."/>
            <person name="Richter J."/>
            <person name="Russo S."/>
            <person name="Schroeder A.J."/>
            <person name="Shu S.Q."/>
            <person name="Stapleton M."/>
            <person name="Yamada C."/>
            <person name="Ashburner M."/>
            <person name="Gelbart W.M."/>
            <person name="Rubin G.M."/>
            <person name="Lewis S.E."/>
        </authorList>
    </citation>
    <scope>GENOME REANNOTATION</scope>
    <source>
        <strain>Berkeley</strain>
    </source>
</reference>
<reference key="5">
    <citation type="journal article" date="2002" name="Genome Biol.">
        <title>A Drosophila full-length cDNA resource.</title>
        <authorList>
            <person name="Stapleton M."/>
            <person name="Carlson J.W."/>
            <person name="Brokstein P."/>
            <person name="Yu C."/>
            <person name="Champe M."/>
            <person name="George R.A."/>
            <person name="Guarin H."/>
            <person name="Kronmiller B."/>
            <person name="Pacleb J.M."/>
            <person name="Park S."/>
            <person name="Wan K.H."/>
            <person name="Rubin G.M."/>
            <person name="Celniker S.E."/>
        </authorList>
    </citation>
    <scope>NUCLEOTIDE SEQUENCE [LARGE SCALE MRNA]</scope>
    <source>
        <strain>Berkeley</strain>
        <tissue>Head</tissue>
    </source>
</reference>
<reference key="6">
    <citation type="journal article" date="2008" name="J. Proteome Res.">
        <title>Phosphoproteome analysis of Drosophila melanogaster embryos.</title>
        <authorList>
            <person name="Zhai B."/>
            <person name="Villen J."/>
            <person name="Beausoleil S.A."/>
            <person name="Mintseris J."/>
            <person name="Gygi S.P."/>
        </authorList>
    </citation>
    <scope>PHOSPHORYLATION [LARGE SCALE ANALYSIS] AT SER-99 AND SER-102</scope>
    <scope>IDENTIFICATION BY MASS SPECTROMETRY</scope>
    <source>
        <tissue>Embryo</tissue>
    </source>
</reference>
<accession>P08570</accession>
<accession>Q9VPP6</accession>
<gene>
    <name type="primary">RpLP1</name>
    <name type="synonym">M(2)21C</name>
    <name type="synonym">rp21C</name>
    <name type="synonym">RPA2</name>
    <name type="synonym">RpP2</name>
    <name type="ORF">CG4087</name>
</gene>
<organism>
    <name type="scientific">Drosophila melanogaster</name>
    <name type="common">Fruit fly</name>
    <dbReference type="NCBI Taxonomy" id="7227"/>
    <lineage>
        <taxon>Eukaryota</taxon>
        <taxon>Metazoa</taxon>
        <taxon>Ecdysozoa</taxon>
        <taxon>Arthropoda</taxon>
        <taxon>Hexapoda</taxon>
        <taxon>Insecta</taxon>
        <taxon>Pterygota</taxon>
        <taxon>Neoptera</taxon>
        <taxon>Endopterygota</taxon>
        <taxon>Diptera</taxon>
        <taxon>Brachycera</taxon>
        <taxon>Muscomorpha</taxon>
        <taxon>Ephydroidea</taxon>
        <taxon>Drosophilidae</taxon>
        <taxon>Drosophila</taxon>
        <taxon>Sophophora</taxon>
    </lineage>
</organism>
<protein>
    <recommendedName>
        <fullName evidence="3">Large ribosomal subunit protein P1</fullName>
    </recommendedName>
    <alternativeName>
        <fullName>60S acidic ribosomal protein P1</fullName>
    </alternativeName>
    <alternativeName>
        <fullName>Acidic ribosomal protein RPA2</fullName>
    </alternativeName>
    <alternativeName>
        <fullName>RP21C</fullName>
    </alternativeName>
</protein>
<feature type="chain" id="PRO_0000157692" description="Large ribosomal subunit protein P1">
    <location>
        <begin position="1"/>
        <end position="112"/>
    </location>
</feature>
<feature type="region of interest" description="Disordered" evidence="1">
    <location>
        <begin position="80"/>
        <end position="112"/>
    </location>
</feature>
<feature type="compositionally biased region" description="Basic and acidic residues" evidence="1">
    <location>
        <begin position="87"/>
        <end position="97"/>
    </location>
</feature>
<feature type="modified residue" description="Phosphoserine" evidence="2">
    <location>
        <position position="99"/>
    </location>
</feature>
<feature type="modified residue" description="Phosphoserine" evidence="2">
    <location>
        <position position="102"/>
    </location>
</feature>
<feature type="sequence conflict" description="In Ref. 1; CAA68557." evidence="3" ref="1">
    <original>C</original>
    <variation>S</variation>
    <location>
        <position position="9"/>
    </location>
</feature>
<feature type="sequence conflict" description="In Ref. 1; CAA68557." evidence="3" ref="1">
    <original>G</original>
    <variation>A</variation>
    <location>
        <position position="53"/>
    </location>
</feature>
<evidence type="ECO:0000256" key="1">
    <source>
        <dbReference type="SAM" id="MobiDB-lite"/>
    </source>
</evidence>
<evidence type="ECO:0000269" key="2">
    <source>
    </source>
</evidence>
<evidence type="ECO:0000305" key="3"/>
<sequence>MSTKAELACVYASLILVDDDVAVTGEKINTILKAANVEVEPYWPGLFAKALEGINVKDLITNIGSGVGAAPAGGAAPAAAAAAPAAESKKEEKKKEEESDQSDDDMGFGLFD</sequence>
<name>RLA1_DROME</name>
<proteinExistence type="evidence at protein level"/>
<comment type="function">
    <text>Plays an important role in the elongation step of protein synthesis.</text>
</comment>
<comment type="subunit">
    <text>P1 and P2 exist as dimers at the large ribosomal subunit.</text>
</comment>
<comment type="interaction">
    <interactant intactId="EBI-125901">
        <id>P08570</id>
    </interactant>
    <interactant intactId="EBI-195497">
        <id>P19889</id>
        <label>RpLP0</label>
    </interactant>
    <organismsDiffer>false</organismsDiffer>
    <experiments>4</experiments>
</comment>
<comment type="similarity">
    <text evidence="3">Belongs to the eukaryotic ribosomal protein P1/P2 family.</text>
</comment>
<dbReference type="EMBL" id="Y00504">
    <property type="protein sequence ID" value="CAA68557.1"/>
    <property type="molecule type" value="mRNA"/>
</dbReference>
<dbReference type="EMBL" id="S62170">
    <property type="protein sequence ID" value="AAB26902.1"/>
    <property type="molecule type" value="mRNA"/>
</dbReference>
<dbReference type="EMBL" id="AE014134">
    <property type="protein sequence ID" value="AAF51499.1"/>
    <property type="molecule type" value="Genomic_DNA"/>
</dbReference>
<dbReference type="EMBL" id="AY069125">
    <property type="protein sequence ID" value="AAL39270.1"/>
    <property type="molecule type" value="mRNA"/>
</dbReference>
<dbReference type="PIR" id="S00659">
    <property type="entry name" value="R5FF2E"/>
</dbReference>
<dbReference type="RefSeq" id="NP_001259822.1">
    <property type="nucleotide sequence ID" value="NM_001272893.1"/>
</dbReference>
<dbReference type="RefSeq" id="NP_476630.1">
    <property type="nucleotide sequence ID" value="NM_057282.4"/>
</dbReference>
<dbReference type="SMR" id="P08570"/>
<dbReference type="BioGRID" id="59470">
    <property type="interactions" value="143"/>
</dbReference>
<dbReference type="DIP" id="DIP-18310N"/>
<dbReference type="FunCoup" id="P08570">
    <property type="interactions" value="853"/>
</dbReference>
<dbReference type="IntAct" id="P08570">
    <property type="interactions" value="13"/>
</dbReference>
<dbReference type="STRING" id="7227.FBpp0304265"/>
<dbReference type="iPTMnet" id="P08570"/>
<dbReference type="PaxDb" id="7227-FBpp0304265"/>
<dbReference type="DNASU" id="33214"/>
<dbReference type="EnsemblMetazoa" id="FBtr0078056">
    <property type="protein sequence ID" value="FBpp0077716"/>
    <property type="gene ID" value="FBgn0002593"/>
</dbReference>
<dbReference type="EnsemblMetazoa" id="FBtr0331932">
    <property type="protein sequence ID" value="FBpp0304265"/>
    <property type="gene ID" value="FBgn0002593"/>
</dbReference>
<dbReference type="GeneID" id="33214"/>
<dbReference type="KEGG" id="dme:Dmel_CG4087"/>
<dbReference type="AGR" id="FB:FBgn0002593"/>
<dbReference type="CTD" id="6176"/>
<dbReference type="FlyBase" id="FBgn0002593">
    <property type="gene designation" value="RpLP1"/>
</dbReference>
<dbReference type="VEuPathDB" id="VectorBase:FBgn0002593"/>
<dbReference type="eggNOG" id="KOG1762">
    <property type="taxonomic scope" value="Eukaryota"/>
</dbReference>
<dbReference type="GeneTree" id="ENSGT00940000170577"/>
<dbReference type="HOGENOM" id="CLU_114656_1_2_1"/>
<dbReference type="InParanoid" id="P08570"/>
<dbReference type="OMA" id="EYIYAAM"/>
<dbReference type="OrthoDB" id="2194681at2759"/>
<dbReference type="PhylomeDB" id="P08570"/>
<dbReference type="Reactome" id="R-DME-156827">
    <property type="pathway name" value="L13a-mediated translational silencing of Ceruloplasmin expression"/>
</dbReference>
<dbReference type="Reactome" id="R-DME-1799339">
    <property type="pathway name" value="SRP-dependent cotranslational protein targeting to membrane"/>
</dbReference>
<dbReference type="Reactome" id="R-DME-72689">
    <property type="pathway name" value="Formation of a pool of free 40S subunits"/>
</dbReference>
<dbReference type="Reactome" id="R-DME-72706">
    <property type="pathway name" value="GTP hydrolysis and joining of the 60S ribosomal subunit"/>
</dbReference>
<dbReference type="Reactome" id="R-DME-975956">
    <property type="pathway name" value="Nonsense Mediated Decay (NMD) independent of the Exon Junction Complex (EJC)"/>
</dbReference>
<dbReference type="Reactome" id="R-DME-975957">
    <property type="pathway name" value="Nonsense Mediated Decay (NMD) enhanced by the Exon Junction Complex (EJC)"/>
</dbReference>
<dbReference type="SignaLink" id="P08570"/>
<dbReference type="BioGRID-ORCS" id="33214">
    <property type="hits" value="1 hit in 1 CRISPR screen"/>
</dbReference>
<dbReference type="ChiTaRS" id="RpLP1">
    <property type="organism name" value="fly"/>
</dbReference>
<dbReference type="GenomeRNAi" id="33214"/>
<dbReference type="PRO" id="PR:P08570"/>
<dbReference type="Proteomes" id="UP000000803">
    <property type="component" value="Chromosome 2L"/>
</dbReference>
<dbReference type="Bgee" id="FBgn0002593">
    <property type="expression patterns" value="Expressed in adult enteroendocrine precursor cell in adult midgut (Drosophila) and 293 other cell types or tissues"/>
</dbReference>
<dbReference type="ExpressionAtlas" id="P08570">
    <property type="expression patterns" value="baseline and differential"/>
</dbReference>
<dbReference type="GO" id="GO:0022625">
    <property type="term" value="C:cytosolic large ribosomal subunit"/>
    <property type="evidence" value="ECO:0000318"/>
    <property type="project" value="GO_Central"/>
</dbReference>
<dbReference type="GO" id="GO:0022626">
    <property type="term" value="C:cytosolic ribosome"/>
    <property type="evidence" value="ECO:0000314"/>
    <property type="project" value="FlyBase"/>
</dbReference>
<dbReference type="GO" id="GO:0030295">
    <property type="term" value="F:protein kinase activator activity"/>
    <property type="evidence" value="ECO:0000318"/>
    <property type="project" value="GO_Central"/>
</dbReference>
<dbReference type="GO" id="GO:0043021">
    <property type="term" value="F:ribonucleoprotein complex binding"/>
    <property type="evidence" value="ECO:0000318"/>
    <property type="project" value="GO_Central"/>
</dbReference>
<dbReference type="GO" id="GO:0003735">
    <property type="term" value="F:structural constituent of ribosome"/>
    <property type="evidence" value="ECO:0000314"/>
    <property type="project" value="FlyBase"/>
</dbReference>
<dbReference type="GO" id="GO:0002181">
    <property type="term" value="P:cytoplasmic translation"/>
    <property type="evidence" value="ECO:0000318"/>
    <property type="project" value="GO_Central"/>
</dbReference>
<dbReference type="GO" id="GO:0006414">
    <property type="term" value="P:translational elongation"/>
    <property type="evidence" value="ECO:0007669"/>
    <property type="project" value="InterPro"/>
</dbReference>
<dbReference type="CDD" id="cd05831">
    <property type="entry name" value="Ribosomal_P1"/>
    <property type="match status" value="1"/>
</dbReference>
<dbReference type="FunFam" id="1.10.10.1410:FF:000001">
    <property type="entry name" value="60S acidic ribosomal protein P1"/>
    <property type="match status" value="1"/>
</dbReference>
<dbReference type="Gene3D" id="1.10.10.1410">
    <property type="match status" value="1"/>
</dbReference>
<dbReference type="HAMAP" id="MF_01478">
    <property type="entry name" value="Ribosomal_L12_arch"/>
    <property type="match status" value="1"/>
</dbReference>
<dbReference type="InterPro" id="IPR038716">
    <property type="entry name" value="P1/P2_N_sf"/>
</dbReference>
<dbReference type="InterPro" id="IPR027534">
    <property type="entry name" value="Ribosomal_P1/P2"/>
</dbReference>
<dbReference type="PANTHER" id="PTHR45696">
    <property type="entry name" value="60S ACIDIC RIBOSOMAL PROTEIN P1"/>
    <property type="match status" value="1"/>
</dbReference>
<dbReference type="PANTHER" id="PTHR45696:SF10">
    <property type="entry name" value="LARGE RIBOSOMAL SUBUNIT PROTEIN P1"/>
    <property type="match status" value="1"/>
</dbReference>
<dbReference type="Pfam" id="PF00428">
    <property type="entry name" value="Ribosomal_60s"/>
    <property type="match status" value="1"/>
</dbReference>